<feature type="chain" id="PRO_1000196756" description="Bifunctional protein FolD">
    <location>
        <begin position="1"/>
        <end position="282"/>
    </location>
</feature>
<feature type="binding site" evidence="1">
    <location>
        <begin position="165"/>
        <end position="167"/>
    </location>
    <ligand>
        <name>NADP(+)</name>
        <dbReference type="ChEBI" id="CHEBI:58349"/>
    </ligand>
</feature>
<feature type="binding site" evidence="1">
    <location>
        <position position="190"/>
    </location>
    <ligand>
        <name>NADP(+)</name>
        <dbReference type="ChEBI" id="CHEBI:58349"/>
    </ligand>
</feature>
<feature type="binding site" evidence="1">
    <location>
        <position position="231"/>
    </location>
    <ligand>
        <name>NADP(+)</name>
        <dbReference type="ChEBI" id="CHEBI:58349"/>
    </ligand>
</feature>
<sequence>MTKILYGNEVALKIKEDLNLRMDKLKEKNIIPKLAILRMGNKQDDIAYERSIIKSCEKLNIETKVEELNEDILEEDFLKLMENLNNEKDIHGILVFRPYPKHLNENIINSSIALNKDVDCMHPLNLERIFEGDLDGVMPCTPEAVIEILKYYDIDLKGKNIVIINRSMVVGKPLSMMVLSNNATVTICHSKTIDLPSITKKADIVVTAIGKAKLIKEEYFNENSIIIDVSINVDENGKLCGDVDFENVKEKVGAITPVPKGVGSVTTTLLLKHIVEAAERNS</sequence>
<dbReference type="EC" id="1.5.1.5" evidence="1"/>
<dbReference type="EC" id="3.5.4.9" evidence="1"/>
<dbReference type="EMBL" id="CP000939">
    <property type="protein sequence ID" value="ACA43692.1"/>
    <property type="molecule type" value="Genomic_DNA"/>
</dbReference>
<dbReference type="RefSeq" id="WP_003399557.1">
    <property type="nucleotide sequence ID" value="NC_010516.1"/>
</dbReference>
<dbReference type="SMR" id="B1IIW9"/>
<dbReference type="KEGG" id="cbb:CLD_3397"/>
<dbReference type="HOGENOM" id="CLU_034045_2_1_9"/>
<dbReference type="UniPathway" id="UPA00193"/>
<dbReference type="Proteomes" id="UP000008541">
    <property type="component" value="Chromosome"/>
</dbReference>
<dbReference type="GO" id="GO:0005829">
    <property type="term" value="C:cytosol"/>
    <property type="evidence" value="ECO:0007669"/>
    <property type="project" value="TreeGrafter"/>
</dbReference>
<dbReference type="GO" id="GO:0004477">
    <property type="term" value="F:methenyltetrahydrofolate cyclohydrolase activity"/>
    <property type="evidence" value="ECO:0007669"/>
    <property type="project" value="UniProtKB-UniRule"/>
</dbReference>
<dbReference type="GO" id="GO:0004488">
    <property type="term" value="F:methylenetetrahydrofolate dehydrogenase (NADP+) activity"/>
    <property type="evidence" value="ECO:0007669"/>
    <property type="project" value="UniProtKB-UniRule"/>
</dbReference>
<dbReference type="GO" id="GO:0000105">
    <property type="term" value="P:L-histidine biosynthetic process"/>
    <property type="evidence" value="ECO:0007669"/>
    <property type="project" value="UniProtKB-KW"/>
</dbReference>
<dbReference type="GO" id="GO:0009086">
    <property type="term" value="P:methionine biosynthetic process"/>
    <property type="evidence" value="ECO:0007669"/>
    <property type="project" value="UniProtKB-KW"/>
</dbReference>
<dbReference type="GO" id="GO:0006164">
    <property type="term" value="P:purine nucleotide biosynthetic process"/>
    <property type="evidence" value="ECO:0007669"/>
    <property type="project" value="UniProtKB-KW"/>
</dbReference>
<dbReference type="GO" id="GO:0035999">
    <property type="term" value="P:tetrahydrofolate interconversion"/>
    <property type="evidence" value="ECO:0007669"/>
    <property type="project" value="UniProtKB-UniRule"/>
</dbReference>
<dbReference type="CDD" id="cd01080">
    <property type="entry name" value="NAD_bind_m-THF_DH_Cyclohyd"/>
    <property type="match status" value="1"/>
</dbReference>
<dbReference type="FunFam" id="3.40.50.720:FF:000094">
    <property type="entry name" value="Bifunctional protein FolD"/>
    <property type="match status" value="1"/>
</dbReference>
<dbReference type="Gene3D" id="3.40.50.10860">
    <property type="entry name" value="Leucine Dehydrogenase, chain A, domain 1"/>
    <property type="match status" value="1"/>
</dbReference>
<dbReference type="Gene3D" id="3.40.50.720">
    <property type="entry name" value="NAD(P)-binding Rossmann-like Domain"/>
    <property type="match status" value="1"/>
</dbReference>
<dbReference type="HAMAP" id="MF_01576">
    <property type="entry name" value="THF_DHG_CYH"/>
    <property type="match status" value="1"/>
</dbReference>
<dbReference type="InterPro" id="IPR046346">
    <property type="entry name" value="Aminoacid_DH-like_N_sf"/>
</dbReference>
<dbReference type="InterPro" id="IPR036291">
    <property type="entry name" value="NAD(P)-bd_dom_sf"/>
</dbReference>
<dbReference type="InterPro" id="IPR000672">
    <property type="entry name" value="THF_DH/CycHdrlase"/>
</dbReference>
<dbReference type="InterPro" id="IPR020630">
    <property type="entry name" value="THF_DH/CycHdrlase_cat_dom"/>
</dbReference>
<dbReference type="InterPro" id="IPR020631">
    <property type="entry name" value="THF_DH/CycHdrlase_NAD-bd_dom"/>
</dbReference>
<dbReference type="PANTHER" id="PTHR48099:SF5">
    <property type="entry name" value="C-1-TETRAHYDROFOLATE SYNTHASE, CYTOPLASMIC"/>
    <property type="match status" value="1"/>
</dbReference>
<dbReference type="PANTHER" id="PTHR48099">
    <property type="entry name" value="C-1-TETRAHYDROFOLATE SYNTHASE, CYTOPLASMIC-RELATED"/>
    <property type="match status" value="1"/>
</dbReference>
<dbReference type="Pfam" id="PF00763">
    <property type="entry name" value="THF_DHG_CYH"/>
    <property type="match status" value="1"/>
</dbReference>
<dbReference type="Pfam" id="PF02882">
    <property type="entry name" value="THF_DHG_CYH_C"/>
    <property type="match status" value="1"/>
</dbReference>
<dbReference type="PRINTS" id="PR00085">
    <property type="entry name" value="THFDHDRGNASE"/>
</dbReference>
<dbReference type="SUPFAM" id="SSF53223">
    <property type="entry name" value="Aminoacid dehydrogenase-like, N-terminal domain"/>
    <property type="match status" value="1"/>
</dbReference>
<dbReference type="SUPFAM" id="SSF51735">
    <property type="entry name" value="NAD(P)-binding Rossmann-fold domains"/>
    <property type="match status" value="1"/>
</dbReference>
<evidence type="ECO:0000255" key="1">
    <source>
        <dbReference type="HAMAP-Rule" id="MF_01576"/>
    </source>
</evidence>
<name>FOLD_CLOBK</name>
<proteinExistence type="inferred from homology"/>
<comment type="function">
    <text evidence="1">Catalyzes the oxidation of 5,10-methylenetetrahydrofolate to 5,10-methenyltetrahydrofolate and then the hydrolysis of 5,10-methenyltetrahydrofolate to 10-formyltetrahydrofolate.</text>
</comment>
<comment type="catalytic activity">
    <reaction evidence="1">
        <text>(6R)-5,10-methylene-5,6,7,8-tetrahydrofolate + NADP(+) = (6R)-5,10-methenyltetrahydrofolate + NADPH</text>
        <dbReference type="Rhea" id="RHEA:22812"/>
        <dbReference type="ChEBI" id="CHEBI:15636"/>
        <dbReference type="ChEBI" id="CHEBI:57455"/>
        <dbReference type="ChEBI" id="CHEBI:57783"/>
        <dbReference type="ChEBI" id="CHEBI:58349"/>
        <dbReference type="EC" id="1.5.1.5"/>
    </reaction>
</comment>
<comment type="catalytic activity">
    <reaction evidence="1">
        <text>(6R)-5,10-methenyltetrahydrofolate + H2O = (6R)-10-formyltetrahydrofolate + H(+)</text>
        <dbReference type="Rhea" id="RHEA:23700"/>
        <dbReference type="ChEBI" id="CHEBI:15377"/>
        <dbReference type="ChEBI" id="CHEBI:15378"/>
        <dbReference type="ChEBI" id="CHEBI:57455"/>
        <dbReference type="ChEBI" id="CHEBI:195366"/>
        <dbReference type="EC" id="3.5.4.9"/>
    </reaction>
</comment>
<comment type="pathway">
    <text evidence="1">One-carbon metabolism; tetrahydrofolate interconversion.</text>
</comment>
<comment type="subunit">
    <text evidence="1">Homodimer.</text>
</comment>
<comment type="similarity">
    <text evidence="1">Belongs to the tetrahydrofolate dehydrogenase/cyclohydrolase family.</text>
</comment>
<gene>
    <name evidence="1" type="primary">folD</name>
    <name type="ordered locus">CLD_3397</name>
</gene>
<reference key="1">
    <citation type="journal article" date="2007" name="PLoS ONE">
        <title>Analysis of the neurotoxin complex genes in Clostridium botulinum A1-A4 and B1 strains: BoNT/A3, /Ba4 and /B1 clusters are located within plasmids.</title>
        <authorList>
            <person name="Smith T.J."/>
            <person name="Hill K.K."/>
            <person name="Foley B.T."/>
            <person name="Detter J.C."/>
            <person name="Munk A.C."/>
            <person name="Bruce D.C."/>
            <person name="Doggett N.A."/>
            <person name="Smith L.A."/>
            <person name="Marks J.D."/>
            <person name="Xie G."/>
            <person name="Brettin T.S."/>
        </authorList>
    </citation>
    <scope>NUCLEOTIDE SEQUENCE [LARGE SCALE GENOMIC DNA]</scope>
    <source>
        <strain>Okra / Type B1</strain>
    </source>
</reference>
<accession>B1IIW9</accession>
<keyword id="KW-0028">Amino-acid biosynthesis</keyword>
<keyword id="KW-0368">Histidine biosynthesis</keyword>
<keyword id="KW-0378">Hydrolase</keyword>
<keyword id="KW-0486">Methionine biosynthesis</keyword>
<keyword id="KW-0511">Multifunctional enzyme</keyword>
<keyword id="KW-0521">NADP</keyword>
<keyword id="KW-0554">One-carbon metabolism</keyword>
<keyword id="KW-0560">Oxidoreductase</keyword>
<keyword id="KW-0658">Purine biosynthesis</keyword>
<organism>
    <name type="scientific">Clostridium botulinum (strain Okra / Type B1)</name>
    <dbReference type="NCBI Taxonomy" id="498213"/>
    <lineage>
        <taxon>Bacteria</taxon>
        <taxon>Bacillati</taxon>
        <taxon>Bacillota</taxon>
        <taxon>Clostridia</taxon>
        <taxon>Eubacteriales</taxon>
        <taxon>Clostridiaceae</taxon>
        <taxon>Clostridium</taxon>
    </lineage>
</organism>
<protein>
    <recommendedName>
        <fullName evidence="1">Bifunctional protein FolD</fullName>
    </recommendedName>
    <domain>
        <recommendedName>
            <fullName evidence="1">Methylenetetrahydrofolate dehydrogenase</fullName>
            <ecNumber evidence="1">1.5.1.5</ecNumber>
        </recommendedName>
    </domain>
    <domain>
        <recommendedName>
            <fullName evidence="1">Methenyltetrahydrofolate cyclohydrolase</fullName>
            <ecNumber evidence="1">3.5.4.9</ecNumber>
        </recommendedName>
    </domain>
</protein>